<organism>
    <name type="scientific">Acanthamoeba polyphaga mimivirus</name>
    <name type="common">APMV</name>
    <dbReference type="NCBI Taxonomy" id="212035"/>
    <lineage>
        <taxon>Viruses</taxon>
        <taxon>Varidnaviria</taxon>
        <taxon>Bamfordvirae</taxon>
        <taxon>Nucleocytoviricota</taxon>
        <taxon>Megaviricetes</taxon>
        <taxon>Imitervirales</taxon>
        <taxon>Mimiviridae</taxon>
        <taxon>Megamimivirinae</taxon>
        <taxon>Mimivirus</taxon>
        <taxon>Mimivirus bradfordmassiliense</taxon>
    </lineage>
</organism>
<feature type="chain" id="PRO_0000244016" description="Uncharacterized protein R367">
    <location>
        <begin position="1"/>
        <end position="483"/>
    </location>
</feature>
<reference key="1">
    <citation type="journal article" date="2004" name="Science">
        <title>The 1.2-megabase genome sequence of Mimivirus.</title>
        <authorList>
            <person name="Raoult D."/>
            <person name="Audic S."/>
            <person name="Robert C."/>
            <person name="Abergel C."/>
            <person name="Renesto P."/>
            <person name="Ogata H."/>
            <person name="La Scola B."/>
            <person name="Susan M."/>
            <person name="Claverie J.-M."/>
        </authorList>
    </citation>
    <scope>NUCLEOTIDE SEQUENCE [LARGE SCALE GENOMIC DNA]</scope>
    <source>
        <strain>Rowbotham-Bradford</strain>
    </source>
</reference>
<keyword id="KW-1185">Reference proteome</keyword>
<organismHost>
    <name type="scientific">Acanthamoeba polyphaga</name>
    <name type="common">Amoeba</name>
    <dbReference type="NCBI Taxonomy" id="5757"/>
</organismHost>
<name>YR367_MIMIV</name>
<sequence>MNCQNKILNSVTVVYGYSSGDFSWKNNDDRKIFRTSGLIASIEGKKYVVTTREQMISCKTLIMYHLFKKNGVLVKSYMHILFQSIENNLIILGSVGYNELILDKDNAVSTTLNQKEIEIILNKFKGTNLDSHQTIPTNRSLYHINKIDLGNTFDNIKYKYHTYDIKFNKQCIFDKSYLPKSLKYKFICQKNINSVGTLGTVVYSAKNKIIGITTHVGTNKIYVTPTTVIISMMRNFIDYFNDQQSYKGQSCFPFKLKIDESNNIIITMQKNKSNKKVPVKNGDMLRTLNGYEIIVNDNEACLCVDSKNIIPLDIYFRMKYQKDASYELTVSRGSKIVKFNLFLVSNTSELRLTDQTYYFPKDTIPHINLFGLIVVKLSHELIDYLVKNGIIVRNYVIENIMNGAELNDDILIILDSTNELNCTTFNFPILTKQTKPIDCPVLTSLNHQKISNLENLSNVKLFTKGENILTLKLNQDSEIDLLV</sequence>
<gene>
    <name type="ordered locus">MIMI_R367</name>
</gene>
<dbReference type="EMBL" id="AY653733">
    <property type="protein sequence ID" value="AAV50636.1"/>
    <property type="molecule type" value="Genomic_DNA"/>
</dbReference>
<dbReference type="KEGG" id="vg:9924988"/>
<dbReference type="OrthoDB" id="30763at10239"/>
<dbReference type="Proteomes" id="UP000001134">
    <property type="component" value="Genome"/>
</dbReference>
<accession>Q5UQV7</accession>
<protein>
    <recommendedName>
        <fullName>Uncharacterized protein R367</fullName>
    </recommendedName>
</protein>
<proteinExistence type="predicted"/>